<reference key="1">
    <citation type="submission" date="2005-09" db="EMBL/GenBank/DDBJ databases">
        <title>The chloroplast genome of mulberry: structural features and comparative analysis.</title>
        <authorList>
            <person name="Ravi V."/>
            <person name="Khurana J.P."/>
            <person name="Tyagi A.K."/>
            <person name="Khurana P."/>
        </authorList>
    </citation>
    <scope>NUCLEOTIDE SEQUENCE [LARGE SCALE GENOMIC DNA]</scope>
    <source>
        <strain>cv. K2</strain>
    </source>
</reference>
<organism>
    <name type="scientific">Morus indica</name>
    <name type="common">Mulberry</name>
    <dbReference type="NCBI Taxonomy" id="248361"/>
    <lineage>
        <taxon>Eukaryota</taxon>
        <taxon>Viridiplantae</taxon>
        <taxon>Streptophyta</taxon>
        <taxon>Embryophyta</taxon>
        <taxon>Tracheophyta</taxon>
        <taxon>Spermatophyta</taxon>
        <taxon>Magnoliopsida</taxon>
        <taxon>eudicotyledons</taxon>
        <taxon>Gunneridae</taxon>
        <taxon>Pentapetalae</taxon>
        <taxon>rosids</taxon>
        <taxon>fabids</taxon>
        <taxon>Rosales</taxon>
        <taxon>Moraceae</taxon>
        <taxon>Moreae</taxon>
        <taxon>Morus</taxon>
    </lineage>
</organism>
<name>RR16_MORIN</name>
<gene>
    <name evidence="1" type="primary">rps16</name>
    <name type="ordered locus">MoinCp003</name>
</gene>
<accession>Q09X35</accession>
<proteinExistence type="inferred from homology"/>
<comment type="subcellular location">
    <subcellularLocation>
        <location>Plastid</location>
        <location>Chloroplast</location>
    </subcellularLocation>
</comment>
<comment type="similarity">
    <text evidence="1">Belongs to the bacterial ribosomal protein bS16 family.</text>
</comment>
<keyword id="KW-0150">Chloroplast</keyword>
<keyword id="KW-0934">Plastid</keyword>
<keyword id="KW-0687">Ribonucleoprotein</keyword>
<keyword id="KW-0689">Ribosomal protein</keyword>
<feature type="chain" id="PRO_0000276953" description="Small ribosomal subunit protein bS16c">
    <location>
        <begin position="1"/>
        <end position="89"/>
    </location>
</feature>
<protein>
    <recommendedName>
        <fullName evidence="1">Small ribosomal subunit protein bS16c</fullName>
    </recommendedName>
    <alternativeName>
        <fullName evidence="2">30S ribosomal protein S16, chloroplastic</fullName>
    </alternativeName>
</protein>
<sequence>MVKLRLKRCGRRQRAIYRIVAIDVRSRREGRALRKVGFYDPIKNQTYLNVPVILYFLEKGAQPTGTVHDISKKAGVFMELRLNHQTKFN</sequence>
<evidence type="ECO:0000255" key="1">
    <source>
        <dbReference type="HAMAP-Rule" id="MF_00385"/>
    </source>
</evidence>
<evidence type="ECO:0000305" key="2"/>
<geneLocation type="chloroplast"/>
<dbReference type="EMBL" id="DQ226511">
    <property type="protein sequence ID" value="ABB20940.1"/>
    <property type="molecule type" value="Genomic_DNA"/>
</dbReference>
<dbReference type="RefSeq" id="YP_762243.1">
    <property type="nucleotide sequence ID" value="NC_008359.1"/>
</dbReference>
<dbReference type="SMR" id="Q09X35"/>
<dbReference type="GeneID" id="4290656"/>
<dbReference type="GO" id="GO:0009507">
    <property type="term" value="C:chloroplast"/>
    <property type="evidence" value="ECO:0007669"/>
    <property type="project" value="UniProtKB-SubCell"/>
</dbReference>
<dbReference type="GO" id="GO:0005739">
    <property type="term" value="C:mitochondrion"/>
    <property type="evidence" value="ECO:0007669"/>
    <property type="project" value="GOC"/>
</dbReference>
<dbReference type="GO" id="GO:0015935">
    <property type="term" value="C:small ribosomal subunit"/>
    <property type="evidence" value="ECO:0007669"/>
    <property type="project" value="TreeGrafter"/>
</dbReference>
<dbReference type="GO" id="GO:0003735">
    <property type="term" value="F:structural constituent of ribosome"/>
    <property type="evidence" value="ECO:0007669"/>
    <property type="project" value="InterPro"/>
</dbReference>
<dbReference type="GO" id="GO:0032543">
    <property type="term" value="P:mitochondrial translation"/>
    <property type="evidence" value="ECO:0007669"/>
    <property type="project" value="TreeGrafter"/>
</dbReference>
<dbReference type="FunFam" id="3.30.1320.10:FF:000003">
    <property type="entry name" value="30S ribosomal protein S16, chloroplastic"/>
    <property type="match status" value="1"/>
</dbReference>
<dbReference type="Gene3D" id="3.30.1320.10">
    <property type="match status" value="1"/>
</dbReference>
<dbReference type="HAMAP" id="MF_00385">
    <property type="entry name" value="Ribosomal_bS16"/>
    <property type="match status" value="1"/>
</dbReference>
<dbReference type="InterPro" id="IPR000307">
    <property type="entry name" value="Ribosomal_bS16"/>
</dbReference>
<dbReference type="InterPro" id="IPR020592">
    <property type="entry name" value="Ribosomal_bS16_CS"/>
</dbReference>
<dbReference type="InterPro" id="IPR023803">
    <property type="entry name" value="Ribosomal_bS16_dom_sf"/>
</dbReference>
<dbReference type="NCBIfam" id="TIGR00002">
    <property type="entry name" value="S16"/>
    <property type="match status" value="1"/>
</dbReference>
<dbReference type="PANTHER" id="PTHR12919">
    <property type="entry name" value="30S RIBOSOMAL PROTEIN S16"/>
    <property type="match status" value="1"/>
</dbReference>
<dbReference type="PANTHER" id="PTHR12919:SF20">
    <property type="entry name" value="SMALL RIBOSOMAL SUBUNIT PROTEIN BS16M"/>
    <property type="match status" value="1"/>
</dbReference>
<dbReference type="Pfam" id="PF00886">
    <property type="entry name" value="Ribosomal_S16"/>
    <property type="match status" value="1"/>
</dbReference>
<dbReference type="SUPFAM" id="SSF54565">
    <property type="entry name" value="Ribosomal protein S16"/>
    <property type="match status" value="1"/>
</dbReference>
<dbReference type="PROSITE" id="PS00732">
    <property type="entry name" value="RIBOSOMAL_S16"/>
    <property type="match status" value="1"/>
</dbReference>